<proteinExistence type="inferred from homology"/>
<organism>
    <name type="scientific">Dechloromonas aromatica (strain RCB)</name>
    <dbReference type="NCBI Taxonomy" id="159087"/>
    <lineage>
        <taxon>Bacteria</taxon>
        <taxon>Pseudomonadati</taxon>
        <taxon>Pseudomonadota</taxon>
        <taxon>Betaproteobacteria</taxon>
        <taxon>Rhodocyclales</taxon>
        <taxon>Azonexaceae</taxon>
        <taxon>Dechloromonas</taxon>
    </lineage>
</organism>
<keyword id="KW-0067">ATP-binding</keyword>
<keyword id="KW-0963">Cytoplasm</keyword>
<keyword id="KW-0324">Glycolysis</keyword>
<keyword id="KW-0418">Kinase</keyword>
<keyword id="KW-0547">Nucleotide-binding</keyword>
<keyword id="KW-0808">Transferase</keyword>
<sequence>MNVIKLTDLDVSGKRVFIRADLNVPQDEAGNITEDTRIRASLPSIKYCLEKGAAVMVTSHLGRPTEGELNHEDSLMPVAVRLGQMLHTSVRLITDWVDGGFEVKPGEVVLLENCRVNKGEKKNNDELAQKMAKLCDIYVNDAFGTAHRAEATTHGIAKYAPVACAGMLMGAEIDALSKALHEPKRPLVAIVGGSKVSSKLTILKSLASKVDQLIVGGGIANTFLLADGKRIGHSLAEPDLVKEAHTIMDIMKERGAEVPLPTDVVVADEVSALARANKISVDDVHANDRILDVGPKTAAKFAEIIANAGTIVWNGPVGVFELPQFAGGTKMMASAIAHSEAFSIAGGGDTLAAIAKFHIADDVGYISTGGGAFLEFLEGKTLPAIAILEERAA</sequence>
<reference key="1">
    <citation type="journal article" date="2009" name="BMC Genomics">
        <title>Metabolic analysis of the soil microbe Dechloromonas aromatica str. RCB: indications of a surprisingly complex life-style and cryptic anaerobic pathways for aromatic degradation.</title>
        <authorList>
            <person name="Salinero K.K."/>
            <person name="Keller K."/>
            <person name="Feil W.S."/>
            <person name="Feil H."/>
            <person name="Trong S."/>
            <person name="Di Bartolo G."/>
            <person name="Lapidus A."/>
        </authorList>
    </citation>
    <scope>NUCLEOTIDE SEQUENCE [LARGE SCALE GENOMIC DNA]</scope>
    <source>
        <strain>RCB</strain>
    </source>
</reference>
<name>PGK_DECAR</name>
<protein>
    <recommendedName>
        <fullName evidence="1">Phosphoglycerate kinase</fullName>
        <ecNumber evidence="1">2.7.2.3</ecNumber>
    </recommendedName>
</protein>
<comment type="catalytic activity">
    <reaction evidence="1">
        <text>(2R)-3-phosphoglycerate + ATP = (2R)-3-phospho-glyceroyl phosphate + ADP</text>
        <dbReference type="Rhea" id="RHEA:14801"/>
        <dbReference type="ChEBI" id="CHEBI:30616"/>
        <dbReference type="ChEBI" id="CHEBI:57604"/>
        <dbReference type="ChEBI" id="CHEBI:58272"/>
        <dbReference type="ChEBI" id="CHEBI:456216"/>
        <dbReference type="EC" id="2.7.2.3"/>
    </reaction>
</comment>
<comment type="pathway">
    <text evidence="1">Carbohydrate degradation; glycolysis; pyruvate from D-glyceraldehyde 3-phosphate: step 2/5.</text>
</comment>
<comment type="subunit">
    <text evidence="1">Monomer.</text>
</comment>
<comment type="subcellular location">
    <subcellularLocation>
        <location evidence="1">Cytoplasm</location>
    </subcellularLocation>
</comment>
<comment type="similarity">
    <text evidence="1">Belongs to the phosphoglycerate kinase family.</text>
</comment>
<accession>Q47A08</accession>
<gene>
    <name evidence="1" type="primary">pgk</name>
    <name type="ordered locus">Daro_3594</name>
</gene>
<evidence type="ECO:0000255" key="1">
    <source>
        <dbReference type="HAMAP-Rule" id="MF_00145"/>
    </source>
</evidence>
<feature type="chain" id="PRO_1000057980" description="Phosphoglycerate kinase">
    <location>
        <begin position="1"/>
        <end position="393"/>
    </location>
</feature>
<feature type="binding site" evidence="1">
    <location>
        <begin position="21"/>
        <end position="23"/>
    </location>
    <ligand>
        <name>substrate</name>
    </ligand>
</feature>
<feature type="binding site" evidence="1">
    <location>
        <position position="37"/>
    </location>
    <ligand>
        <name>substrate</name>
    </ligand>
</feature>
<feature type="binding site" evidence="1">
    <location>
        <begin position="60"/>
        <end position="63"/>
    </location>
    <ligand>
        <name>substrate</name>
    </ligand>
</feature>
<feature type="binding site" evidence="1">
    <location>
        <position position="115"/>
    </location>
    <ligand>
        <name>substrate</name>
    </ligand>
</feature>
<feature type="binding site" evidence="1">
    <location>
        <position position="148"/>
    </location>
    <ligand>
        <name>substrate</name>
    </ligand>
</feature>
<feature type="binding site" evidence="1">
    <location>
        <position position="199"/>
    </location>
    <ligand>
        <name>ATP</name>
        <dbReference type="ChEBI" id="CHEBI:30616"/>
    </ligand>
</feature>
<feature type="binding site" evidence="1">
    <location>
        <position position="321"/>
    </location>
    <ligand>
        <name>ATP</name>
        <dbReference type="ChEBI" id="CHEBI:30616"/>
    </ligand>
</feature>
<feature type="binding site" evidence="1">
    <location>
        <begin position="347"/>
        <end position="350"/>
    </location>
    <ligand>
        <name>ATP</name>
        <dbReference type="ChEBI" id="CHEBI:30616"/>
    </ligand>
</feature>
<dbReference type="EC" id="2.7.2.3" evidence="1"/>
<dbReference type="EMBL" id="CP000089">
    <property type="protein sequence ID" value="AAZ48323.1"/>
    <property type="molecule type" value="Genomic_DNA"/>
</dbReference>
<dbReference type="SMR" id="Q47A08"/>
<dbReference type="STRING" id="159087.Daro_3594"/>
<dbReference type="KEGG" id="dar:Daro_3594"/>
<dbReference type="eggNOG" id="COG0126">
    <property type="taxonomic scope" value="Bacteria"/>
</dbReference>
<dbReference type="HOGENOM" id="CLU_025427_0_2_4"/>
<dbReference type="OrthoDB" id="9808460at2"/>
<dbReference type="UniPathway" id="UPA00109">
    <property type="reaction ID" value="UER00185"/>
</dbReference>
<dbReference type="GO" id="GO:0005829">
    <property type="term" value="C:cytosol"/>
    <property type="evidence" value="ECO:0007669"/>
    <property type="project" value="TreeGrafter"/>
</dbReference>
<dbReference type="GO" id="GO:0043531">
    <property type="term" value="F:ADP binding"/>
    <property type="evidence" value="ECO:0007669"/>
    <property type="project" value="TreeGrafter"/>
</dbReference>
<dbReference type="GO" id="GO:0005524">
    <property type="term" value="F:ATP binding"/>
    <property type="evidence" value="ECO:0007669"/>
    <property type="project" value="UniProtKB-KW"/>
</dbReference>
<dbReference type="GO" id="GO:0004618">
    <property type="term" value="F:phosphoglycerate kinase activity"/>
    <property type="evidence" value="ECO:0007669"/>
    <property type="project" value="UniProtKB-UniRule"/>
</dbReference>
<dbReference type="GO" id="GO:0006094">
    <property type="term" value="P:gluconeogenesis"/>
    <property type="evidence" value="ECO:0007669"/>
    <property type="project" value="TreeGrafter"/>
</dbReference>
<dbReference type="GO" id="GO:0006096">
    <property type="term" value="P:glycolytic process"/>
    <property type="evidence" value="ECO:0007669"/>
    <property type="project" value="UniProtKB-UniRule"/>
</dbReference>
<dbReference type="FunFam" id="3.40.50.1260:FF:000001">
    <property type="entry name" value="Phosphoglycerate kinase"/>
    <property type="match status" value="1"/>
</dbReference>
<dbReference type="FunFam" id="3.40.50.1260:FF:000002">
    <property type="entry name" value="Phosphoglycerate kinase"/>
    <property type="match status" value="1"/>
</dbReference>
<dbReference type="Gene3D" id="3.40.50.1260">
    <property type="entry name" value="Phosphoglycerate kinase, N-terminal domain"/>
    <property type="match status" value="2"/>
</dbReference>
<dbReference type="HAMAP" id="MF_00145">
    <property type="entry name" value="Phosphoglyc_kinase"/>
    <property type="match status" value="1"/>
</dbReference>
<dbReference type="InterPro" id="IPR001576">
    <property type="entry name" value="Phosphoglycerate_kinase"/>
</dbReference>
<dbReference type="InterPro" id="IPR015911">
    <property type="entry name" value="Phosphoglycerate_kinase_CS"/>
</dbReference>
<dbReference type="InterPro" id="IPR015824">
    <property type="entry name" value="Phosphoglycerate_kinase_N"/>
</dbReference>
<dbReference type="InterPro" id="IPR036043">
    <property type="entry name" value="Phosphoglycerate_kinase_sf"/>
</dbReference>
<dbReference type="PANTHER" id="PTHR11406">
    <property type="entry name" value="PHOSPHOGLYCERATE KINASE"/>
    <property type="match status" value="1"/>
</dbReference>
<dbReference type="PANTHER" id="PTHR11406:SF23">
    <property type="entry name" value="PHOSPHOGLYCERATE KINASE 1, CHLOROPLASTIC-RELATED"/>
    <property type="match status" value="1"/>
</dbReference>
<dbReference type="Pfam" id="PF00162">
    <property type="entry name" value="PGK"/>
    <property type="match status" value="1"/>
</dbReference>
<dbReference type="PIRSF" id="PIRSF000724">
    <property type="entry name" value="Pgk"/>
    <property type="match status" value="1"/>
</dbReference>
<dbReference type="PRINTS" id="PR00477">
    <property type="entry name" value="PHGLYCKINASE"/>
</dbReference>
<dbReference type="SUPFAM" id="SSF53748">
    <property type="entry name" value="Phosphoglycerate kinase"/>
    <property type="match status" value="1"/>
</dbReference>
<dbReference type="PROSITE" id="PS00111">
    <property type="entry name" value="PGLYCERATE_KINASE"/>
    <property type="match status" value="1"/>
</dbReference>